<evidence type="ECO:0000250" key="1">
    <source>
        <dbReference type="UniProtKB" id="P10902"/>
    </source>
</evidence>
<evidence type="ECO:0000305" key="2"/>
<organism>
    <name type="scientific">Xylella fastidiosa (strain Temecula1 / ATCC 700964)</name>
    <dbReference type="NCBI Taxonomy" id="183190"/>
    <lineage>
        <taxon>Bacteria</taxon>
        <taxon>Pseudomonadati</taxon>
        <taxon>Pseudomonadota</taxon>
        <taxon>Gammaproteobacteria</taxon>
        <taxon>Lysobacterales</taxon>
        <taxon>Lysobacteraceae</taxon>
        <taxon>Xylella</taxon>
    </lineage>
</organism>
<keyword id="KW-0963">Cytoplasm</keyword>
<keyword id="KW-0274">FAD</keyword>
<keyword id="KW-0285">Flavoprotein</keyword>
<keyword id="KW-0547">Nucleotide-binding</keyword>
<keyword id="KW-0560">Oxidoreductase</keyword>
<keyword id="KW-0662">Pyridine nucleotide biosynthesis</keyword>
<keyword id="KW-1185">Reference proteome</keyword>
<sequence length="512" mass="53938">MAKIVDCFADRPIIVGSGLAGLIAALTISPEPSVLVTRSALGAETSSAWAQGGMSVSLSPDDNPSLHLADTLAAGDGLCDAVAAESIILEALDAFHVLQHFGIHFDQDSNGHLALGLEAAHSRRRIVHVGGDRSGTAIVQALTACVLNDPSITVLEGLEARHILMADNVVCGLLLANPTSEIVLPSSRILLATGGIGGLYDATTNPVNNFGQGIAMAARAGAVLADMEFVQFHPTALHCHNRPLALVSEAVRGEGAVLINERGERFMADIPGAELAARNIVAQAISAEITRGGQVFLDARQALGARFSTRFPTITALCHKVGIDPVHMPIPVCPAAHYHMGGIATDRQGRSSIPGLWVAGEAASTGLHGANRLASNSLLEAVVMGTRAARDITSHNTPHPLGTIPITPKKPDTTLIRPIVSQCLGVLRHAADMHRAIAALLPFVEGEEESSDPAIVALLIAIFAHLRTESRGAHARTDFPLKHDTTQRRNMTLEDVLEIAHSRIAQRKEKIS</sequence>
<reference key="1">
    <citation type="journal article" date="2003" name="J. Bacteriol.">
        <title>Comparative analyses of the complete genome sequences of Pierce's disease and citrus variegated chlorosis strains of Xylella fastidiosa.</title>
        <authorList>
            <person name="Van Sluys M.A."/>
            <person name="de Oliveira M.C."/>
            <person name="Monteiro-Vitorello C.B."/>
            <person name="Miyaki C.Y."/>
            <person name="Furlan L.R."/>
            <person name="Camargo L.E.A."/>
            <person name="da Silva A.C.R."/>
            <person name="Moon D.H."/>
            <person name="Takita M.A."/>
            <person name="Lemos E.G.M."/>
            <person name="Machado M.A."/>
            <person name="Ferro M.I.T."/>
            <person name="da Silva F.R."/>
            <person name="Goldman M.H.S."/>
            <person name="Goldman G.H."/>
            <person name="Lemos M.V.F."/>
            <person name="El-Dorry H."/>
            <person name="Tsai S.M."/>
            <person name="Carrer H."/>
            <person name="Carraro D.M."/>
            <person name="de Oliveira R.C."/>
            <person name="Nunes L.R."/>
            <person name="Siqueira W.J."/>
            <person name="Coutinho L.L."/>
            <person name="Kimura E.T."/>
            <person name="Ferro E.S."/>
            <person name="Harakava R."/>
            <person name="Kuramae E.E."/>
            <person name="Marino C.L."/>
            <person name="Giglioti E."/>
            <person name="Abreu I.L."/>
            <person name="Alves L.M.C."/>
            <person name="do Amaral A.M."/>
            <person name="Baia G.S."/>
            <person name="Blanco S.R."/>
            <person name="Brito M.S."/>
            <person name="Cannavan F.S."/>
            <person name="Celestino A.V."/>
            <person name="da Cunha A.F."/>
            <person name="Fenille R.C."/>
            <person name="Ferro J.A."/>
            <person name="Formighieri E.F."/>
            <person name="Kishi L.T."/>
            <person name="Leoni S.G."/>
            <person name="Oliveira A.R."/>
            <person name="Rosa V.E. Jr."/>
            <person name="Sassaki F.T."/>
            <person name="Sena J.A.D."/>
            <person name="de Souza A.A."/>
            <person name="Truffi D."/>
            <person name="Tsukumo F."/>
            <person name="Yanai G.M."/>
            <person name="Zaros L.G."/>
            <person name="Civerolo E.L."/>
            <person name="Simpson A.J.G."/>
            <person name="Almeida N.F. Jr."/>
            <person name="Setubal J.C."/>
            <person name="Kitajima J.P."/>
        </authorList>
    </citation>
    <scope>NUCLEOTIDE SEQUENCE [LARGE SCALE GENOMIC DNA]</scope>
    <source>
        <strain>Temecula1 / ATCC 700964</strain>
    </source>
</reference>
<feature type="chain" id="PRO_0000184405" description="L-aspartate oxidase">
    <location>
        <begin position="1"/>
        <end position="512"/>
    </location>
</feature>
<feature type="active site" description="Proton donor/acceptor" evidence="1">
    <location>
        <position position="278"/>
    </location>
</feature>
<feature type="binding site" evidence="1">
    <location>
        <begin position="17"/>
        <end position="20"/>
    </location>
    <ligand>
        <name>FAD</name>
        <dbReference type="ChEBI" id="CHEBI:57692"/>
    </ligand>
</feature>
<feature type="binding site" evidence="1">
    <location>
        <begin position="46"/>
        <end position="53"/>
    </location>
    <ligand>
        <name>FAD</name>
        <dbReference type="ChEBI" id="CHEBI:57692"/>
    </ligand>
</feature>
<feature type="binding site" evidence="1">
    <location>
        <position position="361"/>
    </location>
    <ligand>
        <name>FAD</name>
        <dbReference type="ChEBI" id="CHEBI:57692"/>
    </ligand>
</feature>
<feature type="binding site" evidence="1">
    <location>
        <begin position="377"/>
        <end position="378"/>
    </location>
    <ligand>
        <name>FAD</name>
        <dbReference type="ChEBI" id="CHEBI:57692"/>
    </ligand>
</feature>
<feature type="site" description="Important in orienting the L-aspartate substrate" evidence="1">
    <location>
        <position position="118"/>
    </location>
</feature>
<comment type="function">
    <text evidence="1">Catalyzes the oxidation of L-aspartate to iminoaspartate, the first step in the de novo biosynthesis of NAD(+).</text>
</comment>
<comment type="catalytic activity">
    <reaction evidence="1">
        <text>L-aspartate + O2 = iminosuccinate + H2O2</text>
        <dbReference type="Rhea" id="RHEA:25876"/>
        <dbReference type="ChEBI" id="CHEBI:15379"/>
        <dbReference type="ChEBI" id="CHEBI:16240"/>
        <dbReference type="ChEBI" id="CHEBI:29991"/>
        <dbReference type="ChEBI" id="CHEBI:77875"/>
        <dbReference type="EC" id="1.4.3.16"/>
    </reaction>
    <physiologicalReaction direction="left-to-right" evidence="1">
        <dbReference type="Rhea" id="RHEA:25877"/>
    </physiologicalReaction>
</comment>
<comment type="cofactor">
    <cofactor evidence="1">
        <name>FAD</name>
        <dbReference type="ChEBI" id="CHEBI:57692"/>
    </cofactor>
    <text evidence="1">Binds 1 FAD per subunit.</text>
</comment>
<comment type="pathway">
    <text evidence="1">Cofactor biosynthesis; NAD(+) biosynthesis; iminoaspartate from L-aspartate (oxidase route): step 1/1.</text>
</comment>
<comment type="subcellular location">
    <subcellularLocation>
        <location evidence="1">Cytoplasm</location>
    </subcellularLocation>
</comment>
<comment type="similarity">
    <text evidence="2">Belongs to the FAD-dependent oxidoreductase 2 family. NadB subfamily.</text>
</comment>
<protein>
    <recommendedName>
        <fullName evidence="1">L-aspartate oxidase</fullName>
        <shortName evidence="1">LASPO</shortName>
        <ecNumber evidence="1">1.4.3.16</ecNumber>
    </recommendedName>
    <alternativeName>
        <fullName>Quinolinate synthase B</fullName>
    </alternativeName>
</protein>
<proteinExistence type="inferred from homology"/>
<gene>
    <name type="primary">nadB</name>
    <name type="ordered locus">PD_0868</name>
</gene>
<accession>Q87D19</accession>
<dbReference type="EC" id="1.4.3.16" evidence="1"/>
<dbReference type="EMBL" id="AE009442">
    <property type="protein sequence ID" value="AAO28735.1"/>
    <property type="molecule type" value="Genomic_DNA"/>
</dbReference>
<dbReference type="RefSeq" id="WP_004572875.1">
    <property type="nucleotide sequence ID" value="NC_004556.1"/>
</dbReference>
<dbReference type="SMR" id="Q87D19"/>
<dbReference type="KEGG" id="xft:PD_0868"/>
<dbReference type="HOGENOM" id="CLU_014312_3_2_6"/>
<dbReference type="UniPathway" id="UPA00253">
    <property type="reaction ID" value="UER00326"/>
</dbReference>
<dbReference type="Proteomes" id="UP000002516">
    <property type="component" value="Chromosome"/>
</dbReference>
<dbReference type="GO" id="GO:0005737">
    <property type="term" value="C:cytoplasm"/>
    <property type="evidence" value="ECO:0007669"/>
    <property type="project" value="UniProtKB-SubCell"/>
</dbReference>
<dbReference type="GO" id="GO:0008734">
    <property type="term" value="F:L-aspartate oxidase activity"/>
    <property type="evidence" value="ECO:0007669"/>
    <property type="project" value="UniProtKB-EC"/>
</dbReference>
<dbReference type="GO" id="GO:0000166">
    <property type="term" value="F:nucleotide binding"/>
    <property type="evidence" value="ECO:0007669"/>
    <property type="project" value="UniProtKB-KW"/>
</dbReference>
<dbReference type="GO" id="GO:0034628">
    <property type="term" value="P:'de novo' NAD biosynthetic process from L-aspartate"/>
    <property type="evidence" value="ECO:0007669"/>
    <property type="project" value="TreeGrafter"/>
</dbReference>
<dbReference type="FunFam" id="3.90.700.10:FF:000002">
    <property type="entry name" value="L-aspartate oxidase"/>
    <property type="match status" value="1"/>
</dbReference>
<dbReference type="Gene3D" id="3.50.50.60">
    <property type="entry name" value="FAD/NAD(P)-binding domain"/>
    <property type="match status" value="1"/>
</dbReference>
<dbReference type="Gene3D" id="1.20.58.100">
    <property type="entry name" value="Fumarate reductase/succinate dehydrogenase flavoprotein-like, C-terminal domain"/>
    <property type="match status" value="1"/>
</dbReference>
<dbReference type="Gene3D" id="3.90.700.10">
    <property type="entry name" value="Succinate dehydrogenase/fumarate reductase flavoprotein, catalytic domain"/>
    <property type="match status" value="1"/>
</dbReference>
<dbReference type="InterPro" id="IPR003953">
    <property type="entry name" value="FAD-dep_OxRdtase_2_FAD-bd"/>
</dbReference>
<dbReference type="InterPro" id="IPR036188">
    <property type="entry name" value="FAD/NAD-bd_sf"/>
</dbReference>
<dbReference type="InterPro" id="IPR037099">
    <property type="entry name" value="Fum_R/Succ_DH_flav-like_C_sf"/>
</dbReference>
<dbReference type="InterPro" id="IPR015939">
    <property type="entry name" value="Fum_Rdtase/Succ_DH_flav-like_C"/>
</dbReference>
<dbReference type="InterPro" id="IPR005288">
    <property type="entry name" value="NadB"/>
</dbReference>
<dbReference type="InterPro" id="IPR027477">
    <property type="entry name" value="Succ_DH/fumarate_Rdtase_cat_sf"/>
</dbReference>
<dbReference type="NCBIfam" id="TIGR00551">
    <property type="entry name" value="nadB"/>
    <property type="match status" value="1"/>
</dbReference>
<dbReference type="NCBIfam" id="NF005701">
    <property type="entry name" value="PRK07512.1"/>
    <property type="match status" value="1"/>
</dbReference>
<dbReference type="PANTHER" id="PTHR42716">
    <property type="entry name" value="L-ASPARTATE OXIDASE"/>
    <property type="match status" value="1"/>
</dbReference>
<dbReference type="PANTHER" id="PTHR42716:SF2">
    <property type="entry name" value="L-ASPARTATE OXIDASE, CHLOROPLASTIC"/>
    <property type="match status" value="1"/>
</dbReference>
<dbReference type="Pfam" id="PF00890">
    <property type="entry name" value="FAD_binding_2"/>
    <property type="match status" value="1"/>
</dbReference>
<dbReference type="Pfam" id="PF02910">
    <property type="entry name" value="Succ_DH_flav_C"/>
    <property type="match status" value="1"/>
</dbReference>
<dbReference type="PRINTS" id="PR00368">
    <property type="entry name" value="FADPNR"/>
</dbReference>
<dbReference type="SUPFAM" id="SSF51905">
    <property type="entry name" value="FAD/NAD(P)-binding domain"/>
    <property type="match status" value="1"/>
</dbReference>
<dbReference type="SUPFAM" id="SSF46977">
    <property type="entry name" value="Succinate dehydrogenase/fumarate reductase flavoprotein C-terminal domain"/>
    <property type="match status" value="1"/>
</dbReference>
<dbReference type="SUPFAM" id="SSF56425">
    <property type="entry name" value="Succinate dehydrogenase/fumarate reductase flavoprotein, catalytic domain"/>
    <property type="match status" value="1"/>
</dbReference>
<name>NADB_XYLFT</name>